<accession>P12245</accession>
<protein>
    <recommendedName>
        <fullName>C-reactive protein</fullName>
    </recommendedName>
</protein>
<evidence type="ECO:0000255" key="1">
    <source>
        <dbReference type="PROSITE-ProRule" id="PRU01172"/>
    </source>
</evidence>
<evidence type="ECO:0000269" key="2">
    <source>
    </source>
</evidence>
<evidence type="ECO:0000305" key="3"/>
<dbReference type="PIR" id="A05291">
    <property type="entry name" value="A05291"/>
</dbReference>
<dbReference type="GO" id="GO:0005576">
    <property type="term" value="C:extracellular region"/>
    <property type="evidence" value="ECO:0007669"/>
    <property type="project" value="UniProtKB-SubCell"/>
</dbReference>
<dbReference type="GO" id="GO:0006953">
    <property type="term" value="P:acute-phase response"/>
    <property type="evidence" value="ECO:0007669"/>
    <property type="project" value="UniProtKB-KW"/>
</dbReference>
<dbReference type="InterPro" id="IPR001759">
    <property type="entry name" value="Pentraxin-related"/>
</dbReference>
<dbReference type="PROSITE" id="PS51828">
    <property type="entry name" value="PTX_2"/>
    <property type="match status" value="1"/>
</dbReference>
<proteinExistence type="evidence at protein level"/>
<sequence length="32" mass="3660">VVIKTLVFQSESNNSFVELIPMKPLNLRAFXL</sequence>
<name>CRP_PLEPL</name>
<keyword id="KW-0011">Acute phase</keyword>
<keyword id="KW-0106">Calcium</keyword>
<keyword id="KW-0903">Direct protein sequencing</keyword>
<keyword id="KW-0964">Secreted</keyword>
<reference key="1">
    <citation type="journal article" date="1982" name="Biochim. Biophys. Acta">
        <title>C-reactive protein and serum amyloid P component in the plaice (Pleuronectes platessa L.), a marine teleost, are homologous with their human counterparts.</title>
        <authorList>
            <person name="Pepys M.B."/>
            <person name="de Beer F.C."/>
            <person name="Milstein C.P."/>
            <person name="March J.F."/>
            <person name="Feinstein A."/>
            <person name="Butress N."/>
            <person name="Clamp J.R."/>
            <person name="Taylor J."/>
            <person name="Bruton C."/>
            <person name="Fletcher T.C."/>
        </authorList>
    </citation>
    <scope>PROTEIN SEQUENCE</scope>
    <scope>FUNCTION</scope>
    <scope>SUBUNIT</scope>
    <scope>SUBCELLULAR LOCATION</scope>
    <scope>GLYCOSYLATION</scope>
</reference>
<comment type="function">
    <text evidence="2">Displays several functions associated with host defense: it promotes agglutination, bacterial capsular swelling, phagocytosis, and complement fixation through its calcium-dependent binding to phosphorylcholine.</text>
</comment>
<comment type="subunit">
    <text evidence="2">Homopentamer. Pentraxin (or pentaxin) have a discoid arrangement of 5 non-covalently bound subunits.</text>
</comment>
<comment type="subcellular location">
    <subcellularLocation>
        <location evidence="2">Secreted</location>
    </subcellularLocation>
</comment>
<comment type="PTM">
    <text evidence="2">Glycosylated.</text>
</comment>
<comment type="similarity">
    <text evidence="3">Belongs to the pentraxin family.</text>
</comment>
<feature type="chain" id="PRO_0000162502" description="C-reactive protein">
    <location>
        <begin position="1"/>
        <end position="32" status="greater than"/>
    </location>
</feature>
<feature type="domain" description="Pentraxin (PTX)" evidence="1">
    <location>
        <begin position="2"/>
        <end position="32" status="greater than"/>
    </location>
</feature>
<feature type="non-terminal residue">
    <location>
        <position position="32"/>
    </location>
</feature>
<organism>
    <name type="scientific">Pleuronectes platessa</name>
    <name type="common">European plaice</name>
    <dbReference type="NCBI Taxonomy" id="8262"/>
    <lineage>
        <taxon>Eukaryota</taxon>
        <taxon>Metazoa</taxon>
        <taxon>Chordata</taxon>
        <taxon>Craniata</taxon>
        <taxon>Vertebrata</taxon>
        <taxon>Euteleostomi</taxon>
        <taxon>Actinopterygii</taxon>
        <taxon>Neopterygii</taxon>
        <taxon>Teleostei</taxon>
        <taxon>Neoteleostei</taxon>
        <taxon>Acanthomorphata</taxon>
        <taxon>Carangaria</taxon>
        <taxon>Pleuronectiformes</taxon>
        <taxon>Pleuronectoidei</taxon>
        <taxon>Pleuronectidae</taxon>
        <taxon>Pleuronectes</taxon>
    </lineage>
</organism>